<comment type="function">
    <text evidence="1">Binds the lower part of the 30S subunit head. Binds mRNA in the 70S ribosome, positioning it for translation.</text>
</comment>
<comment type="subunit">
    <text evidence="1">Part of the 30S ribosomal subunit. Forms a tight complex with proteins S10 and S14.</text>
</comment>
<comment type="similarity">
    <text evidence="1">Belongs to the universal ribosomal protein uS3 family.</text>
</comment>
<reference key="1">
    <citation type="journal article" date="2009" name="PLoS Pathog.">
        <title>Genomic evidence for the evolution of Streptococcus equi: host restriction, increased virulence, and genetic exchange with human pathogens.</title>
        <authorList>
            <person name="Holden M.T.G."/>
            <person name="Heather Z."/>
            <person name="Paillot R."/>
            <person name="Steward K.F."/>
            <person name="Webb K."/>
            <person name="Ainslie F."/>
            <person name="Jourdan T."/>
            <person name="Bason N.C."/>
            <person name="Holroyd N.E."/>
            <person name="Mungall K."/>
            <person name="Quail M.A."/>
            <person name="Sanders M."/>
            <person name="Simmonds M."/>
            <person name="Willey D."/>
            <person name="Brooks K."/>
            <person name="Aanensen D.M."/>
            <person name="Spratt B.G."/>
            <person name="Jolley K.A."/>
            <person name="Maiden M.C.J."/>
            <person name="Kehoe M."/>
            <person name="Chanter N."/>
            <person name="Bentley S.D."/>
            <person name="Robinson C."/>
            <person name="Maskell D.J."/>
            <person name="Parkhill J."/>
            <person name="Waller A.S."/>
        </authorList>
    </citation>
    <scope>NUCLEOTIDE SEQUENCE [LARGE SCALE GENOMIC DNA]</scope>
    <source>
        <strain>4047</strain>
    </source>
</reference>
<keyword id="KW-0687">Ribonucleoprotein</keyword>
<keyword id="KW-0689">Ribosomal protein</keyword>
<keyword id="KW-0694">RNA-binding</keyword>
<keyword id="KW-0699">rRNA-binding</keyword>
<name>RS3_STRE4</name>
<accession>C0M8D5</accession>
<sequence length="217" mass="24178">MGQKVHPIGMRVGIIRDWDAKWYAEKEYADYLHEDLAIRKFINKELAEASVSTIEIERAVNKVIVSLHTAKPGMVIGKGGANVDALRAQLNKLTGKQVHINIIEIKQPDLDAHLVGENIARQLEQRVAFRRAQKQAIQRTMRAGAKGIKTQVSGRLNGADIARSEGYSEGTVPLHTLRADIDYAWEEADTTYGKLGVKVWIYRGEVLPARKNTKGGK</sequence>
<organism>
    <name type="scientific">Streptococcus equi subsp. equi (strain 4047)</name>
    <dbReference type="NCBI Taxonomy" id="553482"/>
    <lineage>
        <taxon>Bacteria</taxon>
        <taxon>Bacillati</taxon>
        <taxon>Bacillota</taxon>
        <taxon>Bacilli</taxon>
        <taxon>Lactobacillales</taxon>
        <taxon>Streptococcaceae</taxon>
        <taxon>Streptococcus</taxon>
    </lineage>
</organism>
<gene>
    <name evidence="1" type="primary">rpsC</name>
    <name type="ordered locus">SEQ_0061</name>
</gene>
<dbReference type="EMBL" id="FM204883">
    <property type="protein sequence ID" value="CAW91978.1"/>
    <property type="molecule type" value="Genomic_DNA"/>
</dbReference>
<dbReference type="RefSeq" id="WP_012514737.1">
    <property type="nucleotide sequence ID" value="NC_012471.1"/>
</dbReference>
<dbReference type="SMR" id="C0M8D5"/>
<dbReference type="GeneID" id="83703910"/>
<dbReference type="KEGG" id="seu:SEQ_0061"/>
<dbReference type="HOGENOM" id="CLU_058591_0_2_9"/>
<dbReference type="OrthoDB" id="9806396at2"/>
<dbReference type="Proteomes" id="UP000001365">
    <property type="component" value="Chromosome"/>
</dbReference>
<dbReference type="GO" id="GO:0022627">
    <property type="term" value="C:cytosolic small ribosomal subunit"/>
    <property type="evidence" value="ECO:0007669"/>
    <property type="project" value="TreeGrafter"/>
</dbReference>
<dbReference type="GO" id="GO:0003729">
    <property type="term" value="F:mRNA binding"/>
    <property type="evidence" value="ECO:0007669"/>
    <property type="project" value="UniProtKB-UniRule"/>
</dbReference>
<dbReference type="GO" id="GO:0019843">
    <property type="term" value="F:rRNA binding"/>
    <property type="evidence" value="ECO:0007669"/>
    <property type="project" value="UniProtKB-UniRule"/>
</dbReference>
<dbReference type="GO" id="GO:0003735">
    <property type="term" value="F:structural constituent of ribosome"/>
    <property type="evidence" value="ECO:0007669"/>
    <property type="project" value="InterPro"/>
</dbReference>
<dbReference type="GO" id="GO:0006412">
    <property type="term" value="P:translation"/>
    <property type="evidence" value="ECO:0007669"/>
    <property type="project" value="UniProtKB-UniRule"/>
</dbReference>
<dbReference type="CDD" id="cd02412">
    <property type="entry name" value="KH-II_30S_S3"/>
    <property type="match status" value="1"/>
</dbReference>
<dbReference type="FunFam" id="3.30.1140.32:FF:000001">
    <property type="entry name" value="30S ribosomal protein S3"/>
    <property type="match status" value="1"/>
</dbReference>
<dbReference type="FunFam" id="3.30.300.20:FF:000001">
    <property type="entry name" value="30S ribosomal protein S3"/>
    <property type="match status" value="1"/>
</dbReference>
<dbReference type="Gene3D" id="3.30.300.20">
    <property type="match status" value="1"/>
</dbReference>
<dbReference type="Gene3D" id="3.30.1140.32">
    <property type="entry name" value="Ribosomal protein S3, C-terminal domain"/>
    <property type="match status" value="1"/>
</dbReference>
<dbReference type="HAMAP" id="MF_01309_B">
    <property type="entry name" value="Ribosomal_uS3_B"/>
    <property type="match status" value="1"/>
</dbReference>
<dbReference type="InterPro" id="IPR004087">
    <property type="entry name" value="KH_dom"/>
</dbReference>
<dbReference type="InterPro" id="IPR015946">
    <property type="entry name" value="KH_dom-like_a/b"/>
</dbReference>
<dbReference type="InterPro" id="IPR004044">
    <property type="entry name" value="KH_dom_type_2"/>
</dbReference>
<dbReference type="InterPro" id="IPR009019">
    <property type="entry name" value="KH_sf_prok-type"/>
</dbReference>
<dbReference type="InterPro" id="IPR036419">
    <property type="entry name" value="Ribosomal_S3_C_sf"/>
</dbReference>
<dbReference type="InterPro" id="IPR005704">
    <property type="entry name" value="Ribosomal_uS3_bac-typ"/>
</dbReference>
<dbReference type="InterPro" id="IPR001351">
    <property type="entry name" value="Ribosomal_uS3_C"/>
</dbReference>
<dbReference type="InterPro" id="IPR018280">
    <property type="entry name" value="Ribosomal_uS3_CS"/>
</dbReference>
<dbReference type="NCBIfam" id="TIGR01009">
    <property type="entry name" value="rpsC_bact"/>
    <property type="match status" value="1"/>
</dbReference>
<dbReference type="PANTHER" id="PTHR11760">
    <property type="entry name" value="30S/40S RIBOSOMAL PROTEIN S3"/>
    <property type="match status" value="1"/>
</dbReference>
<dbReference type="PANTHER" id="PTHR11760:SF19">
    <property type="entry name" value="SMALL RIBOSOMAL SUBUNIT PROTEIN US3C"/>
    <property type="match status" value="1"/>
</dbReference>
<dbReference type="Pfam" id="PF07650">
    <property type="entry name" value="KH_2"/>
    <property type="match status" value="1"/>
</dbReference>
<dbReference type="Pfam" id="PF00189">
    <property type="entry name" value="Ribosomal_S3_C"/>
    <property type="match status" value="1"/>
</dbReference>
<dbReference type="SMART" id="SM00322">
    <property type="entry name" value="KH"/>
    <property type="match status" value="1"/>
</dbReference>
<dbReference type="SUPFAM" id="SSF54814">
    <property type="entry name" value="Prokaryotic type KH domain (KH-domain type II)"/>
    <property type="match status" value="1"/>
</dbReference>
<dbReference type="SUPFAM" id="SSF54821">
    <property type="entry name" value="Ribosomal protein S3 C-terminal domain"/>
    <property type="match status" value="1"/>
</dbReference>
<dbReference type="PROSITE" id="PS50823">
    <property type="entry name" value="KH_TYPE_2"/>
    <property type="match status" value="1"/>
</dbReference>
<dbReference type="PROSITE" id="PS00548">
    <property type="entry name" value="RIBOSOMAL_S3"/>
    <property type="match status" value="1"/>
</dbReference>
<evidence type="ECO:0000255" key="1">
    <source>
        <dbReference type="HAMAP-Rule" id="MF_01309"/>
    </source>
</evidence>
<evidence type="ECO:0000305" key="2"/>
<protein>
    <recommendedName>
        <fullName evidence="1">Small ribosomal subunit protein uS3</fullName>
    </recommendedName>
    <alternativeName>
        <fullName evidence="2">30S ribosomal protein S3</fullName>
    </alternativeName>
</protein>
<proteinExistence type="inferred from homology"/>
<feature type="chain" id="PRO_1000165511" description="Small ribosomal subunit protein uS3">
    <location>
        <begin position="1"/>
        <end position="217"/>
    </location>
</feature>
<feature type="domain" description="KH type-2" evidence="1">
    <location>
        <begin position="38"/>
        <end position="106"/>
    </location>
</feature>